<dbReference type="EMBL" id="AE016820">
    <property type="protein sequence ID" value="AAS54845.1"/>
    <property type="status" value="ALT_INIT"/>
    <property type="molecule type" value="Genomic_DNA"/>
</dbReference>
<dbReference type="RefSeq" id="NP_987021.1">
    <property type="nucleotide sequence ID" value="NM_212083.2"/>
</dbReference>
<dbReference type="SMR" id="Q74Z51"/>
<dbReference type="FunCoup" id="Q74Z51">
    <property type="interactions" value="27"/>
</dbReference>
<dbReference type="STRING" id="284811.Q74Z51"/>
<dbReference type="GeneID" id="4623324"/>
<dbReference type="KEGG" id="ago:AGOS_AGR355C"/>
<dbReference type="eggNOG" id="ENOG502S890">
    <property type="taxonomic scope" value="Eukaryota"/>
</dbReference>
<dbReference type="InParanoid" id="Q74Z51"/>
<dbReference type="OrthoDB" id="5516652at2759"/>
<dbReference type="Proteomes" id="UP000000591">
    <property type="component" value="Chromosome VII"/>
</dbReference>
<dbReference type="GO" id="GO:0005737">
    <property type="term" value="C:cytoplasm"/>
    <property type="evidence" value="ECO:0007669"/>
    <property type="project" value="UniProtKB-KW"/>
</dbReference>
<dbReference type="GO" id="GO:0042729">
    <property type="term" value="C:DASH complex"/>
    <property type="evidence" value="ECO:0000250"/>
    <property type="project" value="UniProtKB"/>
</dbReference>
<dbReference type="GO" id="GO:0005874">
    <property type="term" value="C:microtubule"/>
    <property type="evidence" value="ECO:0007669"/>
    <property type="project" value="UniProtKB-KW"/>
</dbReference>
<dbReference type="GO" id="GO:0072686">
    <property type="term" value="C:mitotic spindle"/>
    <property type="evidence" value="ECO:0007669"/>
    <property type="project" value="InterPro"/>
</dbReference>
<dbReference type="GO" id="GO:0008608">
    <property type="term" value="P:attachment of spindle microtubules to kinetochore"/>
    <property type="evidence" value="ECO:0000250"/>
    <property type="project" value="UniProtKB"/>
</dbReference>
<dbReference type="GO" id="GO:0051301">
    <property type="term" value="P:cell division"/>
    <property type="evidence" value="ECO:0007669"/>
    <property type="project" value="UniProtKB-KW"/>
</dbReference>
<dbReference type="GO" id="GO:1990758">
    <property type="term" value="P:mitotic sister chromatid biorientation"/>
    <property type="evidence" value="ECO:0000250"/>
    <property type="project" value="UniProtKB"/>
</dbReference>
<dbReference type="GO" id="GO:1990976">
    <property type="term" value="P:protein transport along microtubule to mitotic spindle pole body"/>
    <property type="evidence" value="ECO:0000250"/>
    <property type="project" value="UniProtKB"/>
</dbReference>
<dbReference type="InterPro" id="IPR013959">
    <property type="entry name" value="DASH_Dad4"/>
</dbReference>
<dbReference type="PANTHER" id="PTHR28222">
    <property type="entry name" value="DASH COMPLEX SUBUNIT DAD4"/>
    <property type="match status" value="1"/>
</dbReference>
<dbReference type="PANTHER" id="PTHR28222:SF1">
    <property type="entry name" value="DASH COMPLEX SUBUNIT DAD4"/>
    <property type="match status" value="1"/>
</dbReference>
<dbReference type="Pfam" id="PF08650">
    <property type="entry name" value="DASH_Dad4"/>
    <property type="match status" value="1"/>
</dbReference>
<gene>
    <name type="primary">DAD4</name>
    <name type="ordered locus">AGR355C</name>
</gene>
<feature type="chain" id="PRO_0000176048" description="DASH complex subunit DAD4">
    <location>
        <begin position="1"/>
        <end position="72"/>
    </location>
</feature>
<feature type="coiled-coil region" evidence="3">
    <location>
        <begin position="13"/>
        <end position="50"/>
    </location>
</feature>
<reference key="1">
    <citation type="journal article" date="2004" name="Science">
        <title>The Ashbya gossypii genome as a tool for mapping the ancient Saccharomyces cerevisiae genome.</title>
        <authorList>
            <person name="Dietrich F.S."/>
            <person name="Voegeli S."/>
            <person name="Brachat S."/>
            <person name="Lerch A."/>
            <person name="Gates K."/>
            <person name="Steiner S."/>
            <person name="Mohr C."/>
            <person name="Poehlmann R."/>
            <person name="Luedi P."/>
            <person name="Choi S."/>
            <person name="Wing R.A."/>
            <person name="Flavier A."/>
            <person name="Gaffney T.D."/>
            <person name="Philippsen P."/>
        </authorList>
    </citation>
    <scope>NUCLEOTIDE SEQUENCE [LARGE SCALE GENOMIC DNA]</scope>
    <source>
        <strain>ATCC 10895 / CBS 109.51 / FGSC 9923 / NRRL Y-1056</strain>
    </source>
</reference>
<reference key="2">
    <citation type="journal article" date="2013" name="G3 (Bethesda)">
        <title>Genomes of Ashbya fungi isolated from insects reveal four mating-type loci, numerous translocations, lack of transposons, and distinct gene duplications.</title>
        <authorList>
            <person name="Dietrich F.S."/>
            <person name="Voegeli S."/>
            <person name="Kuo S."/>
            <person name="Philippsen P."/>
        </authorList>
    </citation>
    <scope>GENOME REANNOTATION</scope>
    <source>
        <strain>ATCC 10895 / CBS 109.51 / FGSC 9923 / NRRL Y-1056</strain>
    </source>
</reference>
<comment type="function">
    <text evidence="1">Component of the DASH complex that connects microtubules with kinetochores and couples microtubule depolymerisation to chromosome movement; it is involved in retrieving kinetochores to the spindle poles before their re-orientation on the spindle in early mitosis and allows microtubule depolymerization to pull chromosomes apart and resist detachment during anaphase. Kinetochores, consisting of a centromere-associated inner segment and a microtubule-contacting outer segment, play a crucial role in chromosome segregation by mediating the physical connection between centromeric DNA and microtubules. Kinetochores also serve as an input point for the spindle assembly checkpoint, which delays anaphase until all chromosomes have bioriented on the mitotic spindle.</text>
</comment>
<comment type="subunit">
    <text evidence="1 2">Component of the DASH complex consisting of ASK1, DAD1, DAD2, DAD3, DAD4, DAM1, DUO1, HSK3, SPC19 and SPC34, with a stoichiometry of one copy of each subunit per complex. Multiple DASH complexes oligomerize to form a ring that encircles spindle microtubules and organizes the rod-like NDC80 complexes of the outer kinetochore. DASH complex oligomerization strengthens microtubule attachments (By similarity). On cytoplasmic microtubules, DASH complexes appear to form patches instead of rings (By similarity).</text>
</comment>
<comment type="subcellular location">
    <subcellularLocation>
        <location evidence="1">Nucleus</location>
    </subcellularLocation>
    <subcellularLocation>
        <location evidence="1">Cytoplasm</location>
        <location evidence="1">Cytoskeleton</location>
        <location evidence="1">Spindle</location>
    </subcellularLocation>
    <subcellularLocation>
        <location evidence="1">Chromosome</location>
        <location evidence="1">Centromere</location>
        <location evidence="1">Kinetochore</location>
    </subcellularLocation>
</comment>
<comment type="similarity">
    <text evidence="4">Belongs to the DASH complex DAD4 family.</text>
</comment>
<comment type="sequence caution" evidence="4">
    <conflict type="erroneous initiation">
        <sequence resource="EMBL-CDS" id="AAS54845"/>
    </conflict>
</comment>
<name>DAD4_EREGS</name>
<organism>
    <name type="scientific">Eremothecium gossypii (strain ATCC 10895 / CBS 109.51 / FGSC 9923 / NRRL Y-1056)</name>
    <name type="common">Yeast</name>
    <name type="synonym">Ashbya gossypii</name>
    <dbReference type="NCBI Taxonomy" id="284811"/>
    <lineage>
        <taxon>Eukaryota</taxon>
        <taxon>Fungi</taxon>
        <taxon>Dikarya</taxon>
        <taxon>Ascomycota</taxon>
        <taxon>Saccharomycotina</taxon>
        <taxon>Saccharomycetes</taxon>
        <taxon>Saccharomycetales</taxon>
        <taxon>Saccharomycetaceae</taxon>
        <taxon>Eremothecium</taxon>
    </lineage>
</organism>
<accession>Q74Z51</accession>
<keyword id="KW-0131">Cell cycle</keyword>
<keyword id="KW-0132">Cell division</keyword>
<keyword id="KW-0137">Centromere</keyword>
<keyword id="KW-0158">Chromosome</keyword>
<keyword id="KW-0159">Chromosome partition</keyword>
<keyword id="KW-0175">Coiled coil</keyword>
<keyword id="KW-0963">Cytoplasm</keyword>
<keyword id="KW-0206">Cytoskeleton</keyword>
<keyword id="KW-0995">Kinetochore</keyword>
<keyword id="KW-0493">Microtubule</keyword>
<keyword id="KW-0498">Mitosis</keyword>
<keyword id="KW-0539">Nucleus</keyword>
<keyword id="KW-1185">Reference proteome</keyword>
<evidence type="ECO:0000250" key="1">
    <source>
        <dbReference type="UniProtKB" id="P69851"/>
    </source>
</evidence>
<evidence type="ECO:0000250" key="2">
    <source>
        <dbReference type="UniProtKB" id="Q50HP4"/>
    </source>
</evidence>
<evidence type="ECO:0000255" key="3"/>
<evidence type="ECO:0000305" key="4"/>
<protein>
    <recommendedName>
        <fullName>DASH complex subunit DAD4</fullName>
    </recommendedName>
    <alternativeName>
        <fullName>Outer kinetochore protein DAD4</fullName>
    </alternativeName>
</protein>
<proteinExistence type="inferred from homology"/>
<sequence>MENPHEKVQVGILARIVGNVERLNQSVATLNQELERINTRNRNLELMGQMCEHYGRATAFNLKTTGNRQGPV</sequence>